<reference key="1">
    <citation type="journal article" date="2008" name="DNA Res.">
        <title>Determination of the genome sequence of Porphyromonas gingivalis strain ATCC 33277 and genomic comparison with strain W83 revealed extensive genome rearrangements in P. gingivalis.</title>
        <authorList>
            <person name="Naito M."/>
            <person name="Hirakawa H."/>
            <person name="Yamashita A."/>
            <person name="Ohara N."/>
            <person name="Shoji M."/>
            <person name="Yukitake H."/>
            <person name="Nakayama K."/>
            <person name="Toh H."/>
            <person name="Yoshimura F."/>
            <person name="Kuhara S."/>
            <person name="Hattori M."/>
            <person name="Hayashi T."/>
            <person name="Nakayama K."/>
        </authorList>
    </citation>
    <scope>NUCLEOTIDE SEQUENCE [LARGE SCALE GENOMIC DNA]</scope>
    <source>
        <strain>ATCC 33277 / DSM 20709 / CIP 103683 / JCM 12257 / NCTC 11834 / 2561</strain>
    </source>
</reference>
<comment type="function">
    <text evidence="2">Cell wall formation.</text>
</comment>
<comment type="catalytic activity">
    <reaction evidence="2">
        <text>2 D-alanine + ATP = D-alanyl-D-alanine + ADP + phosphate + H(+)</text>
        <dbReference type="Rhea" id="RHEA:11224"/>
        <dbReference type="ChEBI" id="CHEBI:15378"/>
        <dbReference type="ChEBI" id="CHEBI:30616"/>
        <dbReference type="ChEBI" id="CHEBI:43474"/>
        <dbReference type="ChEBI" id="CHEBI:57416"/>
        <dbReference type="ChEBI" id="CHEBI:57822"/>
        <dbReference type="ChEBI" id="CHEBI:456216"/>
        <dbReference type="EC" id="6.3.2.4"/>
    </reaction>
</comment>
<comment type="cofactor">
    <cofactor evidence="1">
        <name>Mg(2+)</name>
        <dbReference type="ChEBI" id="CHEBI:18420"/>
    </cofactor>
    <cofactor evidence="1">
        <name>Mn(2+)</name>
        <dbReference type="ChEBI" id="CHEBI:29035"/>
    </cofactor>
    <text evidence="1">Binds 2 magnesium or manganese ions per subunit.</text>
</comment>
<comment type="pathway">
    <text evidence="2">Cell wall biogenesis; peptidoglycan biosynthesis.</text>
</comment>
<comment type="subcellular location">
    <subcellularLocation>
        <location evidence="2">Cytoplasm</location>
    </subcellularLocation>
</comment>
<comment type="similarity">
    <text evidence="2">Belongs to the D-alanine--D-alanine ligase family.</text>
</comment>
<organism>
    <name type="scientific">Porphyromonas gingivalis (strain ATCC 33277 / DSM 20709 / CIP 103683 / JCM 12257 / NCTC 11834 / 2561)</name>
    <dbReference type="NCBI Taxonomy" id="431947"/>
    <lineage>
        <taxon>Bacteria</taxon>
        <taxon>Pseudomonadati</taxon>
        <taxon>Bacteroidota</taxon>
        <taxon>Bacteroidia</taxon>
        <taxon>Bacteroidales</taxon>
        <taxon>Porphyromonadaceae</taxon>
        <taxon>Porphyromonas</taxon>
    </lineage>
</organism>
<proteinExistence type="inferred from homology"/>
<feature type="chain" id="PRO_1000091202" description="D-alanine--D-alanine ligase">
    <location>
        <begin position="1"/>
        <end position="330"/>
    </location>
</feature>
<feature type="domain" description="ATP-grasp" evidence="2">
    <location>
        <begin position="122"/>
        <end position="323"/>
    </location>
</feature>
<feature type="binding site" evidence="2">
    <location>
        <begin position="151"/>
        <end position="206"/>
    </location>
    <ligand>
        <name>ATP</name>
        <dbReference type="ChEBI" id="CHEBI:30616"/>
    </ligand>
</feature>
<feature type="binding site" evidence="2">
    <location>
        <position position="277"/>
    </location>
    <ligand>
        <name>Mg(2+)</name>
        <dbReference type="ChEBI" id="CHEBI:18420"/>
        <label>1</label>
    </ligand>
</feature>
<feature type="binding site" evidence="2">
    <location>
        <position position="290"/>
    </location>
    <ligand>
        <name>Mg(2+)</name>
        <dbReference type="ChEBI" id="CHEBI:18420"/>
        <label>1</label>
    </ligand>
</feature>
<feature type="binding site" evidence="2">
    <location>
        <position position="290"/>
    </location>
    <ligand>
        <name>Mg(2+)</name>
        <dbReference type="ChEBI" id="CHEBI:18420"/>
        <label>2</label>
    </ligand>
</feature>
<feature type="binding site" evidence="2">
    <location>
        <position position="292"/>
    </location>
    <ligand>
        <name>Mg(2+)</name>
        <dbReference type="ChEBI" id="CHEBI:18420"/>
        <label>2</label>
    </ligand>
</feature>
<sequence>MKKPIVAVIAGGYSGEHSVSLKSAAGILSWLGSEPFSAFLVLIERDRWSVRVSEQREVPLDKNDFSFDLDDERIRFDYAYITIHGTPGENGLLQGYLDMIGIPYNTGDTLVESLTFNKYVCNRFLSGFGIRIADSMRLTGRDTQPDVADLTARMGLPLFVKPNVGGSSIATTKVVEAAQLLPAIGQAFSEGEEVMIERLICGTEVTCGAFLRKKEVVALPVTEVVAHNEFFDFDAKYNGAVEEITPARISDEATRLIQTMTARIYELLNARGIIRVDYIIEADGIPTLLEVNTTPGMTPTSFIPQQVRAAEMDMKEVLCTIIRDGLNETQ</sequence>
<accession>B2RIT4</accession>
<keyword id="KW-0067">ATP-binding</keyword>
<keyword id="KW-0133">Cell shape</keyword>
<keyword id="KW-0961">Cell wall biogenesis/degradation</keyword>
<keyword id="KW-0963">Cytoplasm</keyword>
<keyword id="KW-0436">Ligase</keyword>
<keyword id="KW-0460">Magnesium</keyword>
<keyword id="KW-0464">Manganese</keyword>
<keyword id="KW-0479">Metal-binding</keyword>
<keyword id="KW-0547">Nucleotide-binding</keyword>
<keyword id="KW-0573">Peptidoglycan synthesis</keyword>
<protein>
    <recommendedName>
        <fullName evidence="2">D-alanine--D-alanine ligase</fullName>
        <ecNumber evidence="2">6.3.2.4</ecNumber>
    </recommendedName>
    <alternativeName>
        <fullName evidence="2">D-Ala-D-Ala ligase</fullName>
    </alternativeName>
    <alternativeName>
        <fullName evidence="2">D-alanylalanine synthetase</fullName>
    </alternativeName>
</protein>
<dbReference type="EC" id="6.3.2.4" evidence="2"/>
<dbReference type="EMBL" id="AP009380">
    <property type="protein sequence ID" value="BAG33279.1"/>
    <property type="molecule type" value="Genomic_DNA"/>
</dbReference>
<dbReference type="RefSeq" id="WP_012457758.1">
    <property type="nucleotide sequence ID" value="NC_010729.1"/>
</dbReference>
<dbReference type="SMR" id="B2RIT4"/>
<dbReference type="GeneID" id="29255979"/>
<dbReference type="KEGG" id="pgn:PGN_0760"/>
<dbReference type="eggNOG" id="COG1181">
    <property type="taxonomic scope" value="Bacteria"/>
</dbReference>
<dbReference type="HOGENOM" id="CLU_039268_1_1_10"/>
<dbReference type="OrthoDB" id="9813261at2"/>
<dbReference type="BioCyc" id="PGIN431947:G1G2V-833-MONOMER"/>
<dbReference type="UniPathway" id="UPA00219"/>
<dbReference type="Proteomes" id="UP000008842">
    <property type="component" value="Chromosome"/>
</dbReference>
<dbReference type="GO" id="GO:0005737">
    <property type="term" value="C:cytoplasm"/>
    <property type="evidence" value="ECO:0007669"/>
    <property type="project" value="UniProtKB-SubCell"/>
</dbReference>
<dbReference type="GO" id="GO:0005524">
    <property type="term" value="F:ATP binding"/>
    <property type="evidence" value="ECO:0007669"/>
    <property type="project" value="UniProtKB-KW"/>
</dbReference>
<dbReference type="GO" id="GO:0008716">
    <property type="term" value="F:D-alanine-D-alanine ligase activity"/>
    <property type="evidence" value="ECO:0007669"/>
    <property type="project" value="UniProtKB-UniRule"/>
</dbReference>
<dbReference type="GO" id="GO:0046872">
    <property type="term" value="F:metal ion binding"/>
    <property type="evidence" value="ECO:0007669"/>
    <property type="project" value="UniProtKB-KW"/>
</dbReference>
<dbReference type="GO" id="GO:0071555">
    <property type="term" value="P:cell wall organization"/>
    <property type="evidence" value="ECO:0007669"/>
    <property type="project" value="UniProtKB-KW"/>
</dbReference>
<dbReference type="GO" id="GO:0009252">
    <property type="term" value="P:peptidoglycan biosynthetic process"/>
    <property type="evidence" value="ECO:0007669"/>
    <property type="project" value="UniProtKB-UniRule"/>
</dbReference>
<dbReference type="GO" id="GO:0008360">
    <property type="term" value="P:regulation of cell shape"/>
    <property type="evidence" value="ECO:0007669"/>
    <property type="project" value="UniProtKB-KW"/>
</dbReference>
<dbReference type="Gene3D" id="3.40.50.20">
    <property type="match status" value="1"/>
</dbReference>
<dbReference type="Gene3D" id="3.30.1490.20">
    <property type="entry name" value="ATP-grasp fold, A domain"/>
    <property type="match status" value="1"/>
</dbReference>
<dbReference type="Gene3D" id="3.30.470.20">
    <property type="entry name" value="ATP-grasp fold, B domain"/>
    <property type="match status" value="1"/>
</dbReference>
<dbReference type="HAMAP" id="MF_00047">
    <property type="entry name" value="Dala_Dala_lig"/>
    <property type="match status" value="1"/>
</dbReference>
<dbReference type="InterPro" id="IPR011761">
    <property type="entry name" value="ATP-grasp"/>
</dbReference>
<dbReference type="InterPro" id="IPR013815">
    <property type="entry name" value="ATP_grasp_subdomain_1"/>
</dbReference>
<dbReference type="InterPro" id="IPR000291">
    <property type="entry name" value="D-Ala_lig_Van_CS"/>
</dbReference>
<dbReference type="InterPro" id="IPR005905">
    <property type="entry name" value="D_ala_D_ala"/>
</dbReference>
<dbReference type="InterPro" id="IPR011095">
    <property type="entry name" value="Dala_Dala_lig_C"/>
</dbReference>
<dbReference type="InterPro" id="IPR011127">
    <property type="entry name" value="Dala_Dala_lig_N"/>
</dbReference>
<dbReference type="InterPro" id="IPR016185">
    <property type="entry name" value="PreATP-grasp_dom_sf"/>
</dbReference>
<dbReference type="NCBIfam" id="NF002527">
    <property type="entry name" value="PRK01966.1-3"/>
    <property type="match status" value="1"/>
</dbReference>
<dbReference type="PANTHER" id="PTHR23132">
    <property type="entry name" value="D-ALANINE--D-ALANINE LIGASE"/>
    <property type="match status" value="1"/>
</dbReference>
<dbReference type="PANTHER" id="PTHR23132:SF23">
    <property type="entry name" value="D-ALANINE--D-ALANINE LIGASE B"/>
    <property type="match status" value="1"/>
</dbReference>
<dbReference type="Pfam" id="PF07478">
    <property type="entry name" value="Dala_Dala_lig_C"/>
    <property type="match status" value="1"/>
</dbReference>
<dbReference type="Pfam" id="PF01820">
    <property type="entry name" value="Dala_Dala_lig_N"/>
    <property type="match status" value="1"/>
</dbReference>
<dbReference type="PIRSF" id="PIRSF039102">
    <property type="entry name" value="Ddl/VanB"/>
    <property type="match status" value="1"/>
</dbReference>
<dbReference type="SUPFAM" id="SSF56059">
    <property type="entry name" value="Glutathione synthetase ATP-binding domain-like"/>
    <property type="match status" value="1"/>
</dbReference>
<dbReference type="SUPFAM" id="SSF52440">
    <property type="entry name" value="PreATP-grasp domain"/>
    <property type="match status" value="1"/>
</dbReference>
<dbReference type="PROSITE" id="PS50975">
    <property type="entry name" value="ATP_GRASP"/>
    <property type="match status" value="1"/>
</dbReference>
<dbReference type="PROSITE" id="PS00843">
    <property type="entry name" value="DALA_DALA_LIGASE_1"/>
    <property type="match status" value="1"/>
</dbReference>
<dbReference type="PROSITE" id="PS00844">
    <property type="entry name" value="DALA_DALA_LIGASE_2"/>
    <property type="match status" value="1"/>
</dbReference>
<name>DDL_PORG3</name>
<evidence type="ECO:0000250" key="1"/>
<evidence type="ECO:0000255" key="2">
    <source>
        <dbReference type="HAMAP-Rule" id="MF_00047"/>
    </source>
</evidence>
<gene>
    <name evidence="2" type="primary">ddl</name>
    <name type="ordered locus">PGN_0760</name>
</gene>